<feature type="chain" id="PRO_0000314506" description="Ribosomal RNA large subunit methyltransferase M">
    <location>
        <begin position="1"/>
        <end position="364"/>
    </location>
</feature>
<feature type="active site" description="Proton acceptor" evidence="1">
    <location>
        <position position="305"/>
    </location>
</feature>
<feature type="binding site" evidence="1">
    <location>
        <position position="187"/>
    </location>
    <ligand>
        <name>S-adenosyl-L-methionine</name>
        <dbReference type="ChEBI" id="CHEBI:59789"/>
    </ligand>
</feature>
<feature type="binding site" evidence="1">
    <location>
        <begin position="220"/>
        <end position="223"/>
    </location>
    <ligand>
        <name>S-adenosyl-L-methionine</name>
        <dbReference type="ChEBI" id="CHEBI:59789"/>
    </ligand>
</feature>
<feature type="binding site" evidence="1">
    <location>
        <position position="239"/>
    </location>
    <ligand>
        <name>S-adenosyl-L-methionine</name>
        <dbReference type="ChEBI" id="CHEBI:59789"/>
    </ligand>
</feature>
<feature type="binding site" evidence="1">
    <location>
        <position position="259"/>
    </location>
    <ligand>
        <name>S-adenosyl-L-methionine</name>
        <dbReference type="ChEBI" id="CHEBI:59789"/>
    </ligand>
</feature>
<feature type="binding site" evidence="1">
    <location>
        <position position="276"/>
    </location>
    <ligand>
        <name>S-adenosyl-L-methionine</name>
        <dbReference type="ChEBI" id="CHEBI:59789"/>
    </ligand>
</feature>
<proteinExistence type="inferred from homology"/>
<dbReference type="EC" id="2.1.1.186" evidence="1"/>
<dbReference type="EMBL" id="CP000644">
    <property type="protein sequence ID" value="ABO91178.1"/>
    <property type="molecule type" value="Genomic_DNA"/>
</dbReference>
<dbReference type="RefSeq" id="WP_005312006.1">
    <property type="nucleotide sequence ID" value="NC_009348.1"/>
</dbReference>
<dbReference type="SMR" id="A4SQK6"/>
<dbReference type="STRING" id="29491.GCA_000820065_03565"/>
<dbReference type="KEGG" id="asa:ASA_3185"/>
<dbReference type="eggNOG" id="COG2933">
    <property type="taxonomic scope" value="Bacteria"/>
</dbReference>
<dbReference type="HOGENOM" id="CLU_043780_0_0_6"/>
<dbReference type="Proteomes" id="UP000000225">
    <property type="component" value="Chromosome"/>
</dbReference>
<dbReference type="GO" id="GO:0005737">
    <property type="term" value="C:cytoplasm"/>
    <property type="evidence" value="ECO:0007669"/>
    <property type="project" value="UniProtKB-SubCell"/>
</dbReference>
<dbReference type="GO" id="GO:0008757">
    <property type="term" value="F:S-adenosylmethionine-dependent methyltransferase activity"/>
    <property type="evidence" value="ECO:0007669"/>
    <property type="project" value="UniProtKB-UniRule"/>
</dbReference>
<dbReference type="GO" id="GO:0032259">
    <property type="term" value="P:methylation"/>
    <property type="evidence" value="ECO:0007669"/>
    <property type="project" value="UniProtKB-KW"/>
</dbReference>
<dbReference type="GO" id="GO:0006364">
    <property type="term" value="P:rRNA processing"/>
    <property type="evidence" value="ECO:0007669"/>
    <property type="project" value="UniProtKB-UniRule"/>
</dbReference>
<dbReference type="Gene3D" id="3.30.2300.20">
    <property type="match status" value="1"/>
</dbReference>
<dbReference type="Gene3D" id="3.30.70.2810">
    <property type="match status" value="1"/>
</dbReference>
<dbReference type="Gene3D" id="3.40.50.150">
    <property type="entry name" value="Vaccinia Virus protein VP39"/>
    <property type="match status" value="1"/>
</dbReference>
<dbReference type="HAMAP" id="MF_01551">
    <property type="entry name" value="23SrRNA_methyltr_M"/>
    <property type="match status" value="1"/>
</dbReference>
<dbReference type="InterPro" id="IPR040739">
    <property type="entry name" value="RlmM_FDX"/>
</dbReference>
<dbReference type="InterPro" id="IPR048646">
    <property type="entry name" value="RlmM_THUMP-like"/>
</dbReference>
<dbReference type="InterPro" id="IPR002877">
    <property type="entry name" value="RNA_MeTrfase_FtsJ_dom"/>
</dbReference>
<dbReference type="InterPro" id="IPR011224">
    <property type="entry name" value="rRNA_MeTrfase_M"/>
</dbReference>
<dbReference type="InterPro" id="IPR029063">
    <property type="entry name" value="SAM-dependent_MTases_sf"/>
</dbReference>
<dbReference type="NCBIfam" id="NF008734">
    <property type="entry name" value="PRK11760.1"/>
    <property type="match status" value="1"/>
</dbReference>
<dbReference type="PANTHER" id="PTHR37524">
    <property type="entry name" value="RIBOSOMAL RNA LARGE SUBUNIT METHYLTRANSFERASE M"/>
    <property type="match status" value="1"/>
</dbReference>
<dbReference type="PANTHER" id="PTHR37524:SF2">
    <property type="entry name" value="RIBOSOMAL RNA METHYLTRANSFERASE FTSJ DOMAIN-CONTAINING PROTEIN"/>
    <property type="match status" value="1"/>
</dbReference>
<dbReference type="Pfam" id="PF01728">
    <property type="entry name" value="FtsJ"/>
    <property type="match status" value="1"/>
</dbReference>
<dbReference type="Pfam" id="PF18125">
    <property type="entry name" value="RlmM_FDX"/>
    <property type="match status" value="1"/>
</dbReference>
<dbReference type="Pfam" id="PF21239">
    <property type="entry name" value="RLMM_N"/>
    <property type="match status" value="1"/>
</dbReference>
<dbReference type="PIRSF" id="PIRSF028774">
    <property type="entry name" value="UCP028774"/>
    <property type="match status" value="1"/>
</dbReference>
<dbReference type="SUPFAM" id="SSF53335">
    <property type="entry name" value="S-adenosyl-L-methionine-dependent methyltransferases"/>
    <property type="match status" value="1"/>
</dbReference>
<reference key="1">
    <citation type="journal article" date="2008" name="BMC Genomics">
        <title>The genome of Aeromonas salmonicida subsp. salmonicida A449: insights into the evolution of a fish pathogen.</title>
        <authorList>
            <person name="Reith M.E."/>
            <person name="Singh R.K."/>
            <person name="Curtis B."/>
            <person name="Boyd J.M."/>
            <person name="Bouevitch A."/>
            <person name="Kimball J."/>
            <person name="Munholland J."/>
            <person name="Murphy C."/>
            <person name="Sarty D."/>
            <person name="Williams J."/>
            <person name="Nash J.H."/>
            <person name="Johnson S.C."/>
            <person name="Brown L.L."/>
        </authorList>
    </citation>
    <scope>NUCLEOTIDE SEQUENCE [LARGE SCALE GENOMIC DNA]</scope>
    <source>
        <strain>A449</strain>
    </source>
</reference>
<organism>
    <name type="scientific">Aeromonas salmonicida (strain A449)</name>
    <dbReference type="NCBI Taxonomy" id="382245"/>
    <lineage>
        <taxon>Bacteria</taxon>
        <taxon>Pseudomonadati</taxon>
        <taxon>Pseudomonadota</taxon>
        <taxon>Gammaproteobacteria</taxon>
        <taxon>Aeromonadales</taxon>
        <taxon>Aeromonadaceae</taxon>
        <taxon>Aeromonas</taxon>
    </lineage>
</organism>
<gene>
    <name evidence="1" type="primary">rlmM</name>
    <name type="ordered locus">ASA_3185</name>
</gene>
<accession>A4SQK6</accession>
<protein>
    <recommendedName>
        <fullName evidence="1">Ribosomal RNA large subunit methyltransferase M</fullName>
        <ecNumber evidence="1">2.1.1.186</ecNumber>
    </recommendedName>
    <alternativeName>
        <fullName evidence="1">23S rRNA (cytidine2498-2'-O)-methyltransferase</fullName>
    </alternativeName>
    <alternativeName>
        <fullName evidence="1">23S rRNA 2'-O-ribose methyltransferase RlmM</fullName>
    </alternativeName>
</protein>
<sequence>MNNLLLYCRPGFEKEAAAEITERASNMQCYGFARVKDDSGYVIFELYDEEQADLLARKLPFRELIFIRQMLVVTHELKDLDVADRISPIIEATSEYTICGDLRVETADTNEAKELSAFCRKFTVPLRQALRSKELLTKKETPHRPVFHAFFMANDHLLLGYSYSFNNSEFHMGIPRLRCPPDAPSRSSLKLEEAFYVFVPREEWDLRLTSGMKAVDLGACPGGWTHQLVRRGMMVTAVDNGTMAQSLMDTGQVKHLRDDGFVWRPSKKNIYWLVCDMVEKPARVVHMIADWFRENDCQEAMFNLKLPMKKRYAEAVHNIEVLRGLLKEVDNAFVIQAKQLYHDREEITVHVYNKYWVSKLEAKE</sequence>
<evidence type="ECO:0000255" key="1">
    <source>
        <dbReference type="HAMAP-Rule" id="MF_01551"/>
    </source>
</evidence>
<name>RLMM_AERS4</name>
<keyword id="KW-0963">Cytoplasm</keyword>
<keyword id="KW-0489">Methyltransferase</keyword>
<keyword id="KW-0698">rRNA processing</keyword>
<keyword id="KW-0949">S-adenosyl-L-methionine</keyword>
<keyword id="KW-0808">Transferase</keyword>
<comment type="function">
    <text evidence="1">Catalyzes the 2'-O-methylation at nucleotide C2498 in 23S rRNA.</text>
</comment>
<comment type="catalytic activity">
    <reaction evidence="1">
        <text>cytidine(2498) in 23S rRNA + S-adenosyl-L-methionine = 2'-O-methylcytidine(2498) in 23S rRNA + S-adenosyl-L-homocysteine + H(+)</text>
        <dbReference type="Rhea" id="RHEA:42788"/>
        <dbReference type="Rhea" id="RHEA-COMP:10244"/>
        <dbReference type="Rhea" id="RHEA-COMP:10245"/>
        <dbReference type="ChEBI" id="CHEBI:15378"/>
        <dbReference type="ChEBI" id="CHEBI:57856"/>
        <dbReference type="ChEBI" id="CHEBI:59789"/>
        <dbReference type="ChEBI" id="CHEBI:74495"/>
        <dbReference type="ChEBI" id="CHEBI:82748"/>
        <dbReference type="EC" id="2.1.1.186"/>
    </reaction>
</comment>
<comment type="subunit">
    <text evidence="1">Monomer.</text>
</comment>
<comment type="subcellular location">
    <subcellularLocation>
        <location evidence="1">Cytoplasm</location>
    </subcellularLocation>
</comment>
<comment type="similarity">
    <text evidence="1">Belongs to the class I-like SAM-binding methyltransferase superfamily. RNA methyltransferase RlmE family. RlmM subfamily.</text>
</comment>